<gene>
    <name evidence="1" type="primary">ureB</name>
    <name type="ordered locus">BCG_1885</name>
</gene>
<dbReference type="EC" id="3.5.1.5" evidence="1"/>
<dbReference type="EMBL" id="AM408590">
    <property type="protein sequence ID" value="CAL71872.1"/>
    <property type="molecule type" value="Genomic_DNA"/>
</dbReference>
<dbReference type="RefSeq" id="WP_003409308.1">
    <property type="nucleotide sequence ID" value="NC_008769.1"/>
</dbReference>
<dbReference type="SMR" id="A1KJR1"/>
<dbReference type="KEGG" id="mbb:BCG_1885"/>
<dbReference type="HOGENOM" id="CLU_129707_1_1_11"/>
<dbReference type="UniPathway" id="UPA00258">
    <property type="reaction ID" value="UER00370"/>
</dbReference>
<dbReference type="Proteomes" id="UP000001472">
    <property type="component" value="Chromosome"/>
</dbReference>
<dbReference type="GO" id="GO:0035550">
    <property type="term" value="C:urease complex"/>
    <property type="evidence" value="ECO:0007669"/>
    <property type="project" value="InterPro"/>
</dbReference>
<dbReference type="GO" id="GO:0009039">
    <property type="term" value="F:urease activity"/>
    <property type="evidence" value="ECO:0007669"/>
    <property type="project" value="UniProtKB-UniRule"/>
</dbReference>
<dbReference type="GO" id="GO:0043419">
    <property type="term" value="P:urea catabolic process"/>
    <property type="evidence" value="ECO:0007669"/>
    <property type="project" value="UniProtKB-UniRule"/>
</dbReference>
<dbReference type="CDD" id="cd00407">
    <property type="entry name" value="Urease_beta"/>
    <property type="match status" value="1"/>
</dbReference>
<dbReference type="Gene3D" id="2.10.150.10">
    <property type="entry name" value="Urease, beta subunit"/>
    <property type="match status" value="1"/>
</dbReference>
<dbReference type="HAMAP" id="MF_01954">
    <property type="entry name" value="Urease_beta"/>
    <property type="match status" value="1"/>
</dbReference>
<dbReference type="InterPro" id="IPR002019">
    <property type="entry name" value="Urease_beta-like"/>
</dbReference>
<dbReference type="InterPro" id="IPR036461">
    <property type="entry name" value="Urease_betasu_sf"/>
</dbReference>
<dbReference type="InterPro" id="IPR050069">
    <property type="entry name" value="Urease_subunit"/>
</dbReference>
<dbReference type="NCBIfam" id="NF009681">
    <property type="entry name" value="PRK13202.1"/>
    <property type="match status" value="1"/>
</dbReference>
<dbReference type="NCBIfam" id="TIGR00192">
    <property type="entry name" value="urease_beta"/>
    <property type="match status" value="1"/>
</dbReference>
<dbReference type="PANTHER" id="PTHR33569">
    <property type="entry name" value="UREASE"/>
    <property type="match status" value="1"/>
</dbReference>
<dbReference type="PANTHER" id="PTHR33569:SF1">
    <property type="entry name" value="UREASE"/>
    <property type="match status" value="1"/>
</dbReference>
<dbReference type="Pfam" id="PF00699">
    <property type="entry name" value="Urease_beta"/>
    <property type="match status" value="1"/>
</dbReference>
<dbReference type="SUPFAM" id="SSF51278">
    <property type="entry name" value="Urease, beta-subunit"/>
    <property type="match status" value="1"/>
</dbReference>
<evidence type="ECO:0000255" key="1">
    <source>
        <dbReference type="HAMAP-Rule" id="MF_01954"/>
    </source>
</evidence>
<proteinExistence type="inferred from homology"/>
<reference key="1">
    <citation type="journal article" date="2007" name="Proc. Natl. Acad. Sci. U.S.A.">
        <title>Genome plasticity of BCG and impact on vaccine efficacy.</title>
        <authorList>
            <person name="Brosch R."/>
            <person name="Gordon S.V."/>
            <person name="Garnier T."/>
            <person name="Eiglmeier K."/>
            <person name="Frigui W."/>
            <person name="Valenti P."/>
            <person name="Dos Santos S."/>
            <person name="Duthoy S."/>
            <person name="Lacroix C."/>
            <person name="Garcia-Pelayo C."/>
            <person name="Inwald J.K."/>
            <person name="Golby P."/>
            <person name="Garcia J.N."/>
            <person name="Hewinson R.G."/>
            <person name="Behr M.A."/>
            <person name="Quail M.A."/>
            <person name="Churcher C."/>
            <person name="Barrell B.G."/>
            <person name="Parkhill J."/>
            <person name="Cole S.T."/>
        </authorList>
    </citation>
    <scope>NUCLEOTIDE SEQUENCE [LARGE SCALE GENOMIC DNA]</scope>
    <source>
        <strain>BCG / Pasteur 1173P2</strain>
    </source>
</reference>
<feature type="chain" id="PRO_1000070744" description="Urease subunit beta">
    <location>
        <begin position="1"/>
        <end position="104"/>
    </location>
</feature>
<comment type="catalytic activity">
    <reaction evidence="1">
        <text>urea + 2 H2O + H(+) = hydrogencarbonate + 2 NH4(+)</text>
        <dbReference type="Rhea" id="RHEA:20557"/>
        <dbReference type="ChEBI" id="CHEBI:15377"/>
        <dbReference type="ChEBI" id="CHEBI:15378"/>
        <dbReference type="ChEBI" id="CHEBI:16199"/>
        <dbReference type="ChEBI" id="CHEBI:17544"/>
        <dbReference type="ChEBI" id="CHEBI:28938"/>
        <dbReference type="EC" id="3.5.1.5"/>
    </reaction>
</comment>
<comment type="pathway">
    <text evidence="1">Nitrogen metabolism; urea degradation; CO(2) and NH(3) from urea (urease route): step 1/1.</text>
</comment>
<comment type="subunit">
    <text evidence="1">Heterotrimer of UreA (gamma), UreB (beta) and UreC (alpha) subunits. Three heterotrimers associate to form the active enzyme.</text>
</comment>
<comment type="subcellular location">
    <subcellularLocation>
        <location evidence="1">Cytoplasm</location>
    </subcellularLocation>
</comment>
<comment type="similarity">
    <text evidence="1">Belongs to the urease beta subunit family.</text>
</comment>
<keyword id="KW-0963">Cytoplasm</keyword>
<keyword id="KW-0378">Hydrolase</keyword>
<protein>
    <recommendedName>
        <fullName evidence="1">Urease subunit beta</fullName>
        <ecNumber evidence="1">3.5.1.5</ecNumber>
    </recommendedName>
    <alternativeName>
        <fullName evidence="1">Urea amidohydrolase subunit beta</fullName>
    </alternativeName>
</protein>
<sequence length="104" mass="11190">MIPGEIFYGSGDIEMNAAALSRLQMRIINAGDRPVQVGSHVHLPQANRALSFDRATAHGYRLDIPAATAVRFEPGIPQIVGLVPLGGRREVPGLTLNPPGRLDR</sequence>
<accession>A1KJR1</accession>
<name>URE2_MYCBP</name>
<organism>
    <name type="scientific">Mycobacterium bovis (strain BCG / Pasteur 1173P2)</name>
    <dbReference type="NCBI Taxonomy" id="410289"/>
    <lineage>
        <taxon>Bacteria</taxon>
        <taxon>Bacillati</taxon>
        <taxon>Actinomycetota</taxon>
        <taxon>Actinomycetes</taxon>
        <taxon>Mycobacteriales</taxon>
        <taxon>Mycobacteriaceae</taxon>
        <taxon>Mycobacterium</taxon>
        <taxon>Mycobacterium tuberculosis complex</taxon>
    </lineage>
</organism>